<keyword id="KW-0240">DNA-directed RNA polymerase</keyword>
<keyword id="KW-0548">Nucleotidyltransferase</keyword>
<keyword id="KW-0804">Transcription</keyword>
<keyword id="KW-0808">Transferase</keyword>
<dbReference type="EC" id="2.7.7.6" evidence="1"/>
<dbReference type="EMBL" id="AM711867">
    <property type="protein sequence ID" value="CAN01835.1"/>
    <property type="molecule type" value="Genomic_DNA"/>
</dbReference>
<dbReference type="RefSeq" id="WP_012038467.1">
    <property type="nucleotide sequence ID" value="NC_009480.1"/>
</dbReference>
<dbReference type="SMR" id="A5CRX2"/>
<dbReference type="GeneID" id="92947766"/>
<dbReference type="KEGG" id="cmi:CMM_1779"/>
<dbReference type="eggNOG" id="COG1758">
    <property type="taxonomic scope" value="Bacteria"/>
</dbReference>
<dbReference type="HOGENOM" id="CLU_125406_1_1_11"/>
<dbReference type="OrthoDB" id="8481372at2"/>
<dbReference type="Proteomes" id="UP000001564">
    <property type="component" value="Chromosome"/>
</dbReference>
<dbReference type="GO" id="GO:0000428">
    <property type="term" value="C:DNA-directed RNA polymerase complex"/>
    <property type="evidence" value="ECO:0007669"/>
    <property type="project" value="UniProtKB-KW"/>
</dbReference>
<dbReference type="GO" id="GO:0003677">
    <property type="term" value="F:DNA binding"/>
    <property type="evidence" value="ECO:0007669"/>
    <property type="project" value="UniProtKB-UniRule"/>
</dbReference>
<dbReference type="GO" id="GO:0003899">
    <property type="term" value="F:DNA-directed RNA polymerase activity"/>
    <property type="evidence" value="ECO:0007669"/>
    <property type="project" value="UniProtKB-UniRule"/>
</dbReference>
<dbReference type="GO" id="GO:0006351">
    <property type="term" value="P:DNA-templated transcription"/>
    <property type="evidence" value="ECO:0007669"/>
    <property type="project" value="UniProtKB-UniRule"/>
</dbReference>
<dbReference type="Gene3D" id="3.90.940.10">
    <property type="match status" value="1"/>
</dbReference>
<dbReference type="HAMAP" id="MF_00366">
    <property type="entry name" value="RNApol_bact_RpoZ"/>
    <property type="match status" value="1"/>
</dbReference>
<dbReference type="InterPro" id="IPR003716">
    <property type="entry name" value="DNA-dir_RNA_pol_omega"/>
</dbReference>
<dbReference type="InterPro" id="IPR006110">
    <property type="entry name" value="Pol_omega/Rpo6/RPB6"/>
</dbReference>
<dbReference type="InterPro" id="IPR036161">
    <property type="entry name" value="RPB6/omega-like_sf"/>
</dbReference>
<dbReference type="NCBIfam" id="TIGR00690">
    <property type="entry name" value="rpoZ"/>
    <property type="match status" value="1"/>
</dbReference>
<dbReference type="PANTHER" id="PTHR34476">
    <property type="entry name" value="DNA-DIRECTED RNA POLYMERASE SUBUNIT OMEGA"/>
    <property type="match status" value="1"/>
</dbReference>
<dbReference type="PANTHER" id="PTHR34476:SF1">
    <property type="entry name" value="DNA-DIRECTED RNA POLYMERASE SUBUNIT OMEGA"/>
    <property type="match status" value="1"/>
</dbReference>
<dbReference type="Pfam" id="PF01192">
    <property type="entry name" value="RNA_pol_Rpb6"/>
    <property type="match status" value="1"/>
</dbReference>
<dbReference type="SMART" id="SM01409">
    <property type="entry name" value="RNA_pol_Rpb6"/>
    <property type="match status" value="1"/>
</dbReference>
<dbReference type="SUPFAM" id="SSF63562">
    <property type="entry name" value="RPB6/omega subunit-like"/>
    <property type="match status" value="1"/>
</dbReference>
<accession>A5CRX2</accession>
<organism>
    <name type="scientific">Clavibacter michiganensis subsp. michiganensis (strain NCPPB 382)</name>
    <dbReference type="NCBI Taxonomy" id="443906"/>
    <lineage>
        <taxon>Bacteria</taxon>
        <taxon>Bacillati</taxon>
        <taxon>Actinomycetota</taxon>
        <taxon>Actinomycetes</taxon>
        <taxon>Micrococcales</taxon>
        <taxon>Microbacteriaceae</taxon>
        <taxon>Clavibacter</taxon>
    </lineage>
</organism>
<protein>
    <recommendedName>
        <fullName evidence="1">DNA-directed RNA polymerase subunit omega</fullName>
        <shortName evidence="1">RNAP omega subunit</shortName>
        <ecNumber evidence="1">2.7.7.6</ecNumber>
    </recommendedName>
    <alternativeName>
        <fullName evidence="1">RNA polymerase omega subunit</fullName>
    </alternativeName>
    <alternativeName>
        <fullName evidence="1">Transcriptase subunit omega</fullName>
    </alternativeName>
</protein>
<evidence type="ECO:0000255" key="1">
    <source>
        <dbReference type="HAMAP-Rule" id="MF_00366"/>
    </source>
</evidence>
<proteinExistence type="inferred from homology"/>
<reference key="1">
    <citation type="journal article" date="2008" name="J. Bacteriol.">
        <title>The genome sequence of the tomato-pathogenic actinomycete Clavibacter michiganensis subsp. michiganensis NCPPB382 reveals a large island involved in pathogenicity.</title>
        <authorList>
            <person name="Gartemann K.-H."/>
            <person name="Abt B."/>
            <person name="Bekel T."/>
            <person name="Burger A."/>
            <person name="Engemann J."/>
            <person name="Fluegel M."/>
            <person name="Gaigalat L."/>
            <person name="Goesmann A."/>
            <person name="Graefen I."/>
            <person name="Kalinowski J."/>
            <person name="Kaup O."/>
            <person name="Kirchner O."/>
            <person name="Krause L."/>
            <person name="Linke B."/>
            <person name="McHardy A."/>
            <person name="Meyer F."/>
            <person name="Pohle S."/>
            <person name="Rueckert C."/>
            <person name="Schneiker S."/>
            <person name="Zellermann E.-M."/>
            <person name="Puehler A."/>
            <person name="Eichenlaub R."/>
            <person name="Kaiser O."/>
            <person name="Bartels D."/>
        </authorList>
    </citation>
    <scope>NUCLEOTIDE SEQUENCE [LARGE SCALE GENOMIC DNA]</scope>
    <source>
        <strain>NCPPB 382</strain>
    </source>
</reference>
<comment type="function">
    <text evidence="1">Promotes RNA polymerase assembly. Latches the N- and C-terminal regions of the beta' subunit thereby facilitating its interaction with the beta and alpha subunits.</text>
</comment>
<comment type="catalytic activity">
    <reaction evidence="1">
        <text>RNA(n) + a ribonucleoside 5'-triphosphate = RNA(n+1) + diphosphate</text>
        <dbReference type="Rhea" id="RHEA:21248"/>
        <dbReference type="Rhea" id="RHEA-COMP:14527"/>
        <dbReference type="Rhea" id="RHEA-COMP:17342"/>
        <dbReference type="ChEBI" id="CHEBI:33019"/>
        <dbReference type="ChEBI" id="CHEBI:61557"/>
        <dbReference type="ChEBI" id="CHEBI:140395"/>
        <dbReference type="EC" id="2.7.7.6"/>
    </reaction>
</comment>
<comment type="subunit">
    <text evidence="1">The RNAP catalytic core consists of 2 alpha, 1 beta, 1 beta' and 1 omega subunit. When a sigma factor is associated with the core the holoenzyme is formed, which can initiate transcription.</text>
</comment>
<comment type="similarity">
    <text evidence="1">Belongs to the RNA polymerase subunit omega family.</text>
</comment>
<gene>
    <name evidence="1" type="primary">rpoZ</name>
    <name type="ordered locus">CMM_1779</name>
</gene>
<name>RPOZ_CLAM3</name>
<sequence length="89" mass="9769">MVDKTQGIIDPPIDELLSKVDSKYALVIFASKRARQINDYYADLHEGSLFDNVGPLVDSTIDDKPLSVAMHEINEDKLVATPIVEPAAS</sequence>
<feature type="chain" id="PRO_1000005910" description="DNA-directed RNA polymerase subunit omega">
    <location>
        <begin position="1"/>
        <end position="89"/>
    </location>
</feature>